<gene>
    <name evidence="1" type="primary">pelA</name>
    <name type="ordered locus">Tpen_0556</name>
</gene>
<proteinExistence type="inferred from homology"/>
<accession>A1RXN2</accession>
<reference key="1">
    <citation type="journal article" date="2008" name="J. Bacteriol.">
        <title>Genome sequence of Thermofilum pendens reveals an exceptional loss of biosynthetic pathways without genome reduction.</title>
        <authorList>
            <person name="Anderson I."/>
            <person name="Rodriguez J."/>
            <person name="Susanti D."/>
            <person name="Porat I."/>
            <person name="Reich C."/>
            <person name="Ulrich L.E."/>
            <person name="Elkins J.G."/>
            <person name="Mavromatis K."/>
            <person name="Lykidis A."/>
            <person name="Kim E."/>
            <person name="Thompson L.S."/>
            <person name="Nolan M."/>
            <person name="Land M."/>
            <person name="Copeland A."/>
            <person name="Lapidus A."/>
            <person name="Lucas S."/>
            <person name="Detter C."/>
            <person name="Zhulin I.B."/>
            <person name="Olsen G.J."/>
            <person name="Whitman W."/>
            <person name="Mukhopadhyay B."/>
            <person name="Bristow J."/>
            <person name="Kyrpides N."/>
        </authorList>
    </citation>
    <scope>NUCLEOTIDE SEQUENCE [LARGE SCALE GENOMIC DNA]</scope>
    <source>
        <strain>DSM 2475 / Hrk 5</strain>
    </source>
</reference>
<keyword id="KW-0963">Cytoplasm</keyword>
<keyword id="KW-0255">Endonuclease</keyword>
<keyword id="KW-0378">Hydrolase</keyword>
<keyword id="KW-0479">Metal-binding</keyword>
<keyword id="KW-0540">Nuclease</keyword>
<keyword id="KW-1185">Reference proteome</keyword>
<comment type="function">
    <text evidence="1">May function in recognizing stalled ribosomes, interact with stem-loop structures in stalled mRNA molecules, and effect endonucleolytic cleavage of the mRNA. May play a role in the release non-functional ribosomes and degradation of damaged mRNAs. Has endoribonuclease activity.</text>
</comment>
<comment type="cofactor">
    <cofactor evidence="1">
        <name>a divalent metal cation</name>
        <dbReference type="ChEBI" id="CHEBI:60240"/>
    </cofactor>
</comment>
<comment type="subunit">
    <text evidence="1">Monomer.</text>
</comment>
<comment type="subcellular location">
    <subcellularLocation>
        <location evidence="1">Cytoplasm</location>
    </subcellularLocation>
</comment>
<comment type="domain">
    <text evidence="1">The N-terminal domain has the RNA-binding Sm fold. It harbors the endoribonuclease activity.</text>
</comment>
<comment type="similarity">
    <text evidence="1">Belongs to the eukaryotic release factor 1 family. Pelota subfamily.</text>
</comment>
<comment type="sequence caution" evidence="2">
    <conflict type="erroneous initiation">
        <sequence resource="EMBL-CDS" id="ABL77962"/>
    </conflict>
</comment>
<dbReference type="EC" id="3.1.-.-" evidence="1"/>
<dbReference type="EMBL" id="CP000505">
    <property type="protein sequence ID" value="ABL77962.1"/>
    <property type="status" value="ALT_INIT"/>
    <property type="molecule type" value="Genomic_DNA"/>
</dbReference>
<dbReference type="RefSeq" id="WP_148677906.1">
    <property type="nucleotide sequence ID" value="NC_008698.1"/>
</dbReference>
<dbReference type="SMR" id="A1RXN2"/>
<dbReference type="STRING" id="368408.Tpen_0556"/>
<dbReference type="EnsemblBacteria" id="ABL77962">
    <property type="protein sequence ID" value="ABL77962"/>
    <property type="gene ID" value="Tpen_0556"/>
</dbReference>
<dbReference type="GeneID" id="4600520"/>
<dbReference type="KEGG" id="tpe:Tpen_0556"/>
<dbReference type="eggNOG" id="arCOG01741">
    <property type="taxonomic scope" value="Archaea"/>
</dbReference>
<dbReference type="HOGENOM" id="CLU_023334_0_0_2"/>
<dbReference type="OrthoDB" id="31300at2157"/>
<dbReference type="Proteomes" id="UP000000641">
    <property type="component" value="Chromosome"/>
</dbReference>
<dbReference type="GO" id="GO:0005737">
    <property type="term" value="C:cytoplasm"/>
    <property type="evidence" value="ECO:0007669"/>
    <property type="project" value="UniProtKB-SubCell"/>
</dbReference>
<dbReference type="GO" id="GO:0004519">
    <property type="term" value="F:endonuclease activity"/>
    <property type="evidence" value="ECO:0007669"/>
    <property type="project" value="UniProtKB-UniRule"/>
</dbReference>
<dbReference type="GO" id="GO:0046872">
    <property type="term" value="F:metal ion binding"/>
    <property type="evidence" value="ECO:0007669"/>
    <property type="project" value="UniProtKB-UniRule"/>
</dbReference>
<dbReference type="GO" id="GO:0070651">
    <property type="term" value="P:nonfunctional rRNA decay"/>
    <property type="evidence" value="ECO:0007669"/>
    <property type="project" value="TreeGrafter"/>
</dbReference>
<dbReference type="GO" id="GO:0070966">
    <property type="term" value="P:nuclear-transcribed mRNA catabolic process, no-go decay"/>
    <property type="evidence" value="ECO:0007669"/>
    <property type="project" value="InterPro"/>
</dbReference>
<dbReference type="GO" id="GO:0070481">
    <property type="term" value="P:nuclear-transcribed mRNA catabolic process, non-stop decay"/>
    <property type="evidence" value="ECO:0007669"/>
    <property type="project" value="InterPro"/>
</dbReference>
<dbReference type="GO" id="GO:0032790">
    <property type="term" value="P:ribosome disassembly"/>
    <property type="evidence" value="ECO:0007669"/>
    <property type="project" value="TreeGrafter"/>
</dbReference>
<dbReference type="GO" id="GO:0071025">
    <property type="term" value="P:RNA surveillance"/>
    <property type="evidence" value="ECO:0007669"/>
    <property type="project" value="InterPro"/>
</dbReference>
<dbReference type="Gene3D" id="3.30.1330.30">
    <property type="match status" value="1"/>
</dbReference>
<dbReference type="Gene3D" id="3.30.420.60">
    <property type="entry name" value="eRF1 domain 2"/>
    <property type="match status" value="1"/>
</dbReference>
<dbReference type="Gene3D" id="2.30.30.870">
    <property type="entry name" value="Pelota, domain A"/>
    <property type="match status" value="1"/>
</dbReference>
<dbReference type="HAMAP" id="MF_01853">
    <property type="entry name" value="PelO"/>
    <property type="match status" value="1"/>
</dbReference>
<dbReference type="InterPro" id="IPR042226">
    <property type="entry name" value="eFR1_2_sf"/>
</dbReference>
<dbReference type="InterPro" id="IPR005140">
    <property type="entry name" value="eRF1_1_Pelota"/>
</dbReference>
<dbReference type="InterPro" id="IPR005142">
    <property type="entry name" value="eRF1_3"/>
</dbReference>
<dbReference type="InterPro" id="IPR038069">
    <property type="entry name" value="Pelota/DOM34_N"/>
</dbReference>
<dbReference type="InterPro" id="IPR023521">
    <property type="entry name" value="Pelota_arc"/>
</dbReference>
<dbReference type="InterPro" id="IPR029064">
    <property type="entry name" value="Ribosomal_eL30-like_sf"/>
</dbReference>
<dbReference type="InterPro" id="IPR004405">
    <property type="entry name" value="Transl-rel_pelota"/>
</dbReference>
<dbReference type="PANTHER" id="PTHR10853">
    <property type="entry name" value="PELOTA"/>
    <property type="match status" value="1"/>
</dbReference>
<dbReference type="PANTHER" id="PTHR10853:SF0">
    <property type="entry name" value="PROTEIN PELOTA HOMOLOG"/>
    <property type="match status" value="1"/>
</dbReference>
<dbReference type="Pfam" id="PF03463">
    <property type="entry name" value="eRF1_1"/>
    <property type="match status" value="1"/>
</dbReference>
<dbReference type="Pfam" id="PF03465">
    <property type="entry name" value="eRF1_3"/>
    <property type="match status" value="1"/>
</dbReference>
<dbReference type="SMART" id="SM01194">
    <property type="entry name" value="eRF1_1"/>
    <property type="match status" value="1"/>
</dbReference>
<dbReference type="SUPFAM" id="SSF159065">
    <property type="entry name" value="Dom34/Pelota N-terminal domain-like"/>
    <property type="match status" value="1"/>
</dbReference>
<dbReference type="SUPFAM" id="SSF55315">
    <property type="entry name" value="L30e-like"/>
    <property type="match status" value="1"/>
</dbReference>
<organism>
    <name type="scientific">Thermofilum pendens (strain DSM 2475 / Hrk 5)</name>
    <dbReference type="NCBI Taxonomy" id="368408"/>
    <lineage>
        <taxon>Archaea</taxon>
        <taxon>Thermoproteota</taxon>
        <taxon>Thermoprotei</taxon>
        <taxon>Thermofilales</taxon>
        <taxon>Thermofilaceae</taxon>
        <taxon>Thermofilum</taxon>
    </lineage>
</organism>
<name>PELO_THEPD</name>
<feature type="chain" id="PRO_0000361825" description="Protein pelota homolog">
    <location>
        <begin position="1"/>
        <end position="352"/>
    </location>
</feature>
<sequence>MRVLGLNQERGEVELVVEVLEDLYYLFLLVRKGDVVYGWTTRQLRIERATGEERGERIPVYLGVEVEKVSYAKFSEKLRFTGRVVEAPEEVYAKGSFHTIQVGVGDRVKIVKKSGIDGFTRNILEKAASKIRRVLLISVGDEEVAVGYLSPVGVEVRAVVGYSPVGRGKESSLDERYREPIASIVQRIFESGRAEHVDEVVVAVNERLAEVVSRVLGELGVKARVVKVSEGGEAGIYELLRGGQSRELLSSVRLPLELAEVERVLQELFSGKGKAVAGLENVEKVAEWGIVKTLIVSDALLFGEESRERVLKVLGEVFSRNGKIFIVPEESEAGRKLKPFGGALAELYYSLE</sequence>
<protein>
    <recommendedName>
        <fullName evidence="1">Protein pelota homolog</fullName>
        <ecNumber evidence="1">3.1.-.-</ecNumber>
    </recommendedName>
</protein>
<evidence type="ECO:0000255" key="1">
    <source>
        <dbReference type="HAMAP-Rule" id="MF_01853"/>
    </source>
</evidence>
<evidence type="ECO:0000305" key="2"/>